<organism>
    <name type="scientific">Ruegeria sp. (strain TM1040)</name>
    <name type="common">Silicibacter sp.</name>
    <dbReference type="NCBI Taxonomy" id="292414"/>
    <lineage>
        <taxon>Bacteria</taxon>
        <taxon>Pseudomonadati</taxon>
        <taxon>Pseudomonadota</taxon>
        <taxon>Alphaproteobacteria</taxon>
        <taxon>Rhodobacterales</taxon>
        <taxon>Roseobacteraceae</taxon>
        <taxon>Ruegeria</taxon>
    </lineage>
</organism>
<keyword id="KW-1185">Reference proteome</keyword>
<keyword id="KW-0678">Repressor</keyword>
<keyword id="KW-0687">Ribonucleoprotein</keyword>
<keyword id="KW-0689">Ribosomal protein</keyword>
<keyword id="KW-0694">RNA-binding</keyword>
<keyword id="KW-0699">rRNA-binding</keyword>
<keyword id="KW-0810">Translation regulation</keyword>
<keyword id="KW-0820">tRNA-binding</keyword>
<evidence type="ECO:0000255" key="1">
    <source>
        <dbReference type="HAMAP-Rule" id="MF_01318"/>
    </source>
</evidence>
<evidence type="ECO:0000305" key="2"/>
<reference key="1">
    <citation type="submission" date="2006-05" db="EMBL/GenBank/DDBJ databases">
        <title>Complete sequence of chromosome of Silicibacter sp. TM1040.</title>
        <authorList>
            <consortium name="US DOE Joint Genome Institute"/>
            <person name="Copeland A."/>
            <person name="Lucas S."/>
            <person name="Lapidus A."/>
            <person name="Barry K."/>
            <person name="Detter J.C."/>
            <person name="Glavina del Rio T."/>
            <person name="Hammon N."/>
            <person name="Israni S."/>
            <person name="Dalin E."/>
            <person name="Tice H."/>
            <person name="Pitluck S."/>
            <person name="Brettin T."/>
            <person name="Bruce D."/>
            <person name="Han C."/>
            <person name="Tapia R."/>
            <person name="Goodwin L."/>
            <person name="Thompson L.S."/>
            <person name="Gilna P."/>
            <person name="Schmutz J."/>
            <person name="Larimer F."/>
            <person name="Land M."/>
            <person name="Hauser L."/>
            <person name="Kyrpides N."/>
            <person name="Kim E."/>
            <person name="Belas R."/>
            <person name="Moran M.A."/>
            <person name="Buchan A."/>
            <person name="Gonzalez J.M."/>
            <person name="Schell M.A."/>
            <person name="Sun F."/>
            <person name="Richardson P."/>
        </authorList>
    </citation>
    <scope>NUCLEOTIDE SEQUENCE [LARGE SCALE GENOMIC DNA]</scope>
    <source>
        <strain>TM1040</strain>
    </source>
</reference>
<accession>Q1GK53</accession>
<name>RL1_RUEST</name>
<sequence length="232" mass="24040">MAKLGKRTRAAREAFAGKSNLTIEEAVALVKANATTKFDETVEIAMNLGVDTRHADQMVRGVVGLPNGTGKTMRVAVFARGPKADEAKEAGADIVGAEDLMETIQGGTIDFDRCIATPDMMPVVGRLGKVLGPRNLMPNPKVGTVTMDVKAAVEAAKGGEVQFKAEKGGVVHAGVGKASFDEAKLVENVRAFVSAVAKAKPSGAKGAYMKKIVLSSTMGPGVTLDVDGAVSE</sequence>
<feature type="chain" id="PRO_0000308107" description="Large ribosomal subunit protein uL1">
    <location>
        <begin position="1"/>
        <end position="232"/>
    </location>
</feature>
<comment type="function">
    <text evidence="1">Binds directly to 23S rRNA. The L1 stalk is quite mobile in the ribosome, and is involved in E site tRNA release.</text>
</comment>
<comment type="function">
    <text evidence="1">Protein L1 is also a translational repressor protein, it controls the translation of the L11 operon by binding to its mRNA.</text>
</comment>
<comment type="subunit">
    <text evidence="1">Part of the 50S ribosomal subunit.</text>
</comment>
<comment type="similarity">
    <text evidence="1">Belongs to the universal ribosomal protein uL1 family.</text>
</comment>
<dbReference type="EMBL" id="CP000377">
    <property type="protein sequence ID" value="ABF62963.1"/>
    <property type="molecule type" value="Genomic_DNA"/>
</dbReference>
<dbReference type="RefSeq" id="WP_011537595.1">
    <property type="nucleotide sequence ID" value="NC_008044.1"/>
</dbReference>
<dbReference type="SMR" id="Q1GK53"/>
<dbReference type="STRING" id="292414.TM1040_0230"/>
<dbReference type="KEGG" id="sit:TM1040_0230"/>
<dbReference type="eggNOG" id="COG0081">
    <property type="taxonomic scope" value="Bacteria"/>
</dbReference>
<dbReference type="HOGENOM" id="CLU_062853_0_0_5"/>
<dbReference type="OrthoDB" id="9803740at2"/>
<dbReference type="Proteomes" id="UP000000636">
    <property type="component" value="Chromosome"/>
</dbReference>
<dbReference type="GO" id="GO:0022625">
    <property type="term" value="C:cytosolic large ribosomal subunit"/>
    <property type="evidence" value="ECO:0007669"/>
    <property type="project" value="TreeGrafter"/>
</dbReference>
<dbReference type="GO" id="GO:0019843">
    <property type="term" value="F:rRNA binding"/>
    <property type="evidence" value="ECO:0007669"/>
    <property type="project" value="UniProtKB-UniRule"/>
</dbReference>
<dbReference type="GO" id="GO:0003735">
    <property type="term" value="F:structural constituent of ribosome"/>
    <property type="evidence" value="ECO:0007669"/>
    <property type="project" value="InterPro"/>
</dbReference>
<dbReference type="GO" id="GO:0000049">
    <property type="term" value="F:tRNA binding"/>
    <property type="evidence" value="ECO:0007669"/>
    <property type="project" value="UniProtKB-KW"/>
</dbReference>
<dbReference type="GO" id="GO:0006417">
    <property type="term" value="P:regulation of translation"/>
    <property type="evidence" value="ECO:0007669"/>
    <property type="project" value="UniProtKB-KW"/>
</dbReference>
<dbReference type="GO" id="GO:0006412">
    <property type="term" value="P:translation"/>
    <property type="evidence" value="ECO:0007669"/>
    <property type="project" value="UniProtKB-UniRule"/>
</dbReference>
<dbReference type="CDD" id="cd00403">
    <property type="entry name" value="Ribosomal_L1"/>
    <property type="match status" value="1"/>
</dbReference>
<dbReference type="FunFam" id="3.40.50.790:FF:000001">
    <property type="entry name" value="50S ribosomal protein L1"/>
    <property type="match status" value="1"/>
</dbReference>
<dbReference type="Gene3D" id="3.30.190.20">
    <property type="match status" value="1"/>
</dbReference>
<dbReference type="Gene3D" id="3.40.50.790">
    <property type="match status" value="1"/>
</dbReference>
<dbReference type="HAMAP" id="MF_01318_B">
    <property type="entry name" value="Ribosomal_uL1_B"/>
    <property type="match status" value="1"/>
</dbReference>
<dbReference type="InterPro" id="IPR005878">
    <property type="entry name" value="Ribosom_uL1_bac-type"/>
</dbReference>
<dbReference type="InterPro" id="IPR002143">
    <property type="entry name" value="Ribosomal_uL1"/>
</dbReference>
<dbReference type="InterPro" id="IPR023674">
    <property type="entry name" value="Ribosomal_uL1-like"/>
</dbReference>
<dbReference type="InterPro" id="IPR028364">
    <property type="entry name" value="Ribosomal_uL1/biogenesis"/>
</dbReference>
<dbReference type="InterPro" id="IPR016095">
    <property type="entry name" value="Ribosomal_uL1_3-a/b-sand"/>
</dbReference>
<dbReference type="InterPro" id="IPR023673">
    <property type="entry name" value="Ribosomal_uL1_CS"/>
</dbReference>
<dbReference type="NCBIfam" id="TIGR01169">
    <property type="entry name" value="rplA_bact"/>
    <property type="match status" value="1"/>
</dbReference>
<dbReference type="PANTHER" id="PTHR36427">
    <property type="entry name" value="54S RIBOSOMAL PROTEIN L1, MITOCHONDRIAL"/>
    <property type="match status" value="1"/>
</dbReference>
<dbReference type="PANTHER" id="PTHR36427:SF3">
    <property type="entry name" value="LARGE RIBOSOMAL SUBUNIT PROTEIN UL1M"/>
    <property type="match status" value="1"/>
</dbReference>
<dbReference type="Pfam" id="PF00687">
    <property type="entry name" value="Ribosomal_L1"/>
    <property type="match status" value="1"/>
</dbReference>
<dbReference type="PIRSF" id="PIRSF002155">
    <property type="entry name" value="Ribosomal_L1"/>
    <property type="match status" value="1"/>
</dbReference>
<dbReference type="SUPFAM" id="SSF56808">
    <property type="entry name" value="Ribosomal protein L1"/>
    <property type="match status" value="1"/>
</dbReference>
<dbReference type="PROSITE" id="PS01199">
    <property type="entry name" value="RIBOSOMAL_L1"/>
    <property type="match status" value="1"/>
</dbReference>
<gene>
    <name evidence="1" type="primary">rplA</name>
    <name type="ordered locus">TM1040_0230</name>
</gene>
<protein>
    <recommendedName>
        <fullName evidence="1">Large ribosomal subunit protein uL1</fullName>
    </recommendedName>
    <alternativeName>
        <fullName evidence="2">50S ribosomal protein L1</fullName>
    </alternativeName>
</protein>
<proteinExistence type="inferred from homology"/>